<feature type="chain" id="PRO_0000158670" description="Uncharacterized FAD-dependent oxidoreductase MJ0033">
    <location>
        <begin position="1"/>
        <end position="539"/>
    </location>
</feature>
<feature type="active site" evidence="1">
    <location>
        <position position="227"/>
    </location>
</feature>
<feature type="active site" evidence="1">
    <location>
        <position position="243"/>
    </location>
</feature>
<feature type="binding site" evidence="2">
    <location>
        <begin position="6"/>
        <end position="20"/>
    </location>
    <ligand>
        <name>FAD</name>
        <dbReference type="ChEBI" id="CHEBI:57692"/>
    </ligand>
</feature>
<evidence type="ECO:0000250" key="1"/>
<evidence type="ECO:0000255" key="2"/>
<evidence type="ECO:0000305" key="3"/>
<organism>
    <name type="scientific">Methanocaldococcus jannaschii (strain ATCC 43067 / DSM 2661 / JAL-1 / JCM 10045 / NBRC 100440)</name>
    <name type="common">Methanococcus jannaschii</name>
    <dbReference type="NCBI Taxonomy" id="243232"/>
    <lineage>
        <taxon>Archaea</taxon>
        <taxon>Methanobacteriati</taxon>
        <taxon>Methanobacteriota</taxon>
        <taxon>Methanomada group</taxon>
        <taxon>Methanococci</taxon>
        <taxon>Methanococcales</taxon>
        <taxon>Methanocaldococcaceae</taxon>
        <taxon>Methanocaldococcus</taxon>
    </lineage>
</organism>
<reference key="1">
    <citation type="journal article" date="1996" name="Science">
        <title>Complete genome sequence of the methanogenic archaeon, Methanococcus jannaschii.</title>
        <authorList>
            <person name="Bult C.J."/>
            <person name="White O."/>
            <person name="Olsen G.J."/>
            <person name="Zhou L."/>
            <person name="Fleischmann R.D."/>
            <person name="Sutton G.G."/>
            <person name="Blake J.A."/>
            <person name="FitzGerald L.M."/>
            <person name="Clayton R.A."/>
            <person name="Gocayne J.D."/>
            <person name="Kerlavage A.R."/>
            <person name="Dougherty B.A."/>
            <person name="Tomb J.-F."/>
            <person name="Adams M.D."/>
            <person name="Reich C.I."/>
            <person name="Overbeek R."/>
            <person name="Kirkness E.F."/>
            <person name="Weinstock K.G."/>
            <person name="Merrick J.M."/>
            <person name="Glodek A."/>
            <person name="Scott J.L."/>
            <person name="Geoghagen N.S.M."/>
            <person name="Weidman J.F."/>
            <person name="Fuhrmann J.L."/>
            <person name="Nguyen D."/>
            <person name="Utterback T.R."/>
            <person name="Kelley J.M."/>
            <person name="Peterson J.D."/>
            <person name="Sadow P.W."/>
            <person name="Hanna M.C."/>
            <person name="Cotton M.D."/>
            <person name="Roberts K.M."/>
            <person name="Hurst M.A."/>
            <person name="Kaine B.P."/>
            <person name="Borodovsky M."/>
            <person name="Klenk H.-P."/>
            <person name="Fraser C.M."/>
            <person name="Smith H.O."/>
            <person name="Woese C.R."/>
            <person name="Venter J.C."/>
        </authorList>
    </citation>
    <scope>NUCLEOTIDE SEQUENCE [LARGE SCALE GENOMIC DNA]</scope>
    <source>
        <strain>ATCC 43067 / DSM 2661 / JAL-1 / JCM 10045 / NBRC 100440</strain>
    </source>
</reference>
<name>Y033_METJA</name>
<protein>
    <recommendedName>
        <fullName>Uncharacterized FAD-dependent oxidoreductase MJ0033</fullName>
    </recommendedName>
</protein>
<proteinExistence type="inferred from homology"/>
<keyword id="KW-0274">FAD</keyword>
<keyword id="KW-0285">Flavoprotein</keyword>
<keyword id="KW-0560">Oxidoreductase</keyword>
<keyword id="KW-1185">Reference proteome</keyword>
<dbReference type="EMBL" id="L77117">
    <property type="protein sequence ID" value="AAB98014.1"/>
    <property type="molecule type" value="Genomic_DNA"/>
</dbReference>
<dbReference type="PIR" id="A64304">
    <property type="entry name" value="A64304"/>
</dbReference>
<dbReference type="RefSeq" id="WP_010869524.1">
    <property type="nucleotide sequence ID" value="NC_000909.1"/>
</dbReference>
<dbReference type="SMR" id="Q60356"/>
<dbReference type="FunCoup" id="Q60356">
    <property type="interactions" value="181"/>
</dbReference>
<dbReference type="STRING" id="243232.MJ_0033"/>
<dbReference type="PaxDb" id="243232-MJ_0033"/>
<dbReference type="EnsemblBacteria" id="AAB98014">
    <property type="protein sequence ID" value="AAB98014"/>
    <property type="gene ID" value="MJ_0033"/>
</dbReference>
<dbReference type="GeneID" id="1450871"/>
<dbReference type="KEGG" id="mja:MJ_0033"/>
<dbReference type="eggNOG" id="arCOG00571">
    <property type="taxonomic scope" value="Archaea"/>
</dbReference>
<dbReference type="HOGENOM" id="CLU_014312_8_1_2"/>
<dbReference type="InParanoid" id="Q60356"/>
<dbReference type="OrthoDB" id="23539at2157"/>
<dbReference type="PhylomeDB" id="Q60356"/>
<dbReference type="Proteomes" id="UP000000805">
    <property type="component" value="Chromosome"/>
</dbReference>
<dbReference type="GO" id="GO:0016491">
    <property type="term" value="F:oxidoreductase activity"/>
    <property type="evidence" value="ECO:0007669"/>
    <property type="project" value="UniProtKB-KW"/>
</dbReference>
<dbReference type="FunFam" id="1.20.58.100:FF:000002">
    <property type="entry name" value="L-aspartate oxidase"/>
    <property type="match status" value="1"/>
</dbReference>
<dbReference type="FunFam" id="3.90.700.10:FF:000002">
    <property type="entry name" value="L-aspartate oxidase"/>
    <property type="match status" value="1"/>
</dbReference>
<dbReference type="Gene3D" id="3.50.50.60">
    <property type="entry name" value="FAD/NAD(P)-binding domain"/>
    <property type="match status" value="1"/>
</dbReference>
<dbReference type="Gene3D" id="1.20.58.100">
    <property type="entry name" value="Fumarate reductase/succinate dehydrogenase flavoprotein-like, C-terminal domain"/>
    <property type="match status" value="1"/>
</dbReference>
<dbReference type="Gene3D" id="3.90.700.10">
    <property type="entry name" value="Succinate dehydrogenase/fumarate reductase flavoprotein, catalytic domain"/>
    <property type="match status" value="1"/>
</dbReference>
<dbReference type="InterPro" id="IPR003953">
    <property type="entry name" value="FAD-dep_OxRdtase_2_FAD-bd"/>
</dbReference>
<dbReference type="InterPro" id="IPR036188">
    <property type="entry name" value="FAD/NAD-bd_sf"/>
</dbReference>
<dbReference type="InterPro" id="IPR037099">
    <property type="entry name" value="Fum_R/Succ_DH_flav-like_C_sf"/>
</dbReference>
<dbReference type="InterPro" id="IPR015939">
    <property type="entry name" value="Fum_Rdtase/Succ_DH_flav-like_C"/>
</dbReference>
<dbReference type="InterPro" id="IPR030664">
    <property type="entry name" value="SdhA/FrdA/AprA"/>
</dbReference>
<dbReference type="InterPro" id="IPR027477">
    <property type="entry name" value="Succ_DH/fumarate_Rdtase_cat_sf"/>
</dbReference>
<dbReference type="NCBIfam" id="NF004900">
    <property type="entry name" value="PRK06263.1"/>
    <property type="match status" value="1"/>
</dbReference>
<dbReference type="PANTHER" id="PTHR11632">
    <property type="entry name" value="SUCCINATE DEHYDROGENASE 2 FLAVOPROTEIN SUBUNIT"/>
    <property type="match status" value="1"/>
</dbReference>
<dbReference type="PANTHER" id="PTHR11632:SF51">
    <property type="entry name" value="SUCCINATE DEHYDROGENASE [UBIQUINONE] FLAVOPROTEIN SUBUNIT, MITOCHONDRIAL"/>
    <property type="match status" value="1"/>
</dbReference>
<dbReference type="Pfam" id="PF00890">
    <property type="entry name" value="FAD_binding_2"/>
    <property type="match status" value="1"/>
</dbReference>
<dbReference type="Pfam" id="PF02910">
    <property type="entry name" value="Succ_DH_flav_C"/>
    <property type="match status" value="1"/>
</dbReference>
<dbReference type="PIRSF" id="PIRSF000171">
    <property type="entry name" value="SDHA_APRA_LASPO"/>
    <property type="match status" value="1"/>
</dbReference>
<dbReference type="PRINTS" id="PR00368">
    <property type="entry name" value="FADPNR"/>
</dbReference>
<dbReference type="SUPFAM" id="SSF51905">
    <property type="entry name" value="FAD/NAD(P)-binding domain"/>
    <property type="match status" value="1"/>
</dbReference>
<dbReference type="SUPFAM" id="SSF46977">
    <property type="entry name" value="Succinate dehydrogenase/fumarate reductase flavoprotein C-terminal domain"/>
    <property type="match status" value="1"/>
</dbReference>
<dbReference type="SUPFAM" id="SSF56425">
    <property type="entry name" value="Succinate dehydrogenase/fumarate reductase flavoprotein, catalytic domain"/>
    <property type="match status" value="1"/>
</dbReference>
<comment type="cofactor">
    <cofactor evidence="1">
        <name>FAD</name>
        <dbReference type="ChEBI" id="CHEBI:57692"/>
    </cofactor>
</comment>
<comment type="similarity">
    <text evidence="3">Belongs to the FAD-dependent oxidoreductase 2 family. FRD/SDH subfamily.</text>
</comment>
<gene>
    <name type="ordered locus">MJ0033</name>
</gene>
<sequence>MKTDILIIGGGGAAARAAIECRDKNVIIAVKGLFGKSGCTVMAEGGYNAVFNPKDSFKKHFYDTVKGGGFINNPKLVEILVKNAPKELLNLERFGALFDRTEDGFIAQRPFGGQSFNRTCYCGDRTGHEIMRGLMEYISKFERIKILEEVMAIKLIVKDNRCYGAIFLDLKTGNIFPIFAKATILATGGAGQLYPITSNPIQKTGDGFAIAYNEGAELIDMEMVQFHPTGMVGTGILVTEAVRGEGGILYNKYKERFMVRYDKERMELSTRDVVARAIYKEIQEGRGVNGGVYLDVSHLPNEVIEKKLETMLKQFLRVGIDIRKEPMIVSPTAHHFMGGLKINERCETNIIGLFACGEVTGGVHGANRLGGNALADTQVFGAIAGKSAKEFVENHDFNNIDAEEDVAKILEEINSLKGDLNVYNLIEDLRKVMWDYVSIIRNEDGLKKALEKIDEIERNIDNVKVNGIIDLQNYFELKNMVVVAKLVTKSALYRKESRGAHYREDFPETKEEWRGNIIIKGKKMWFEKLDYSVFQNFLE</sequence>
<accession>Q60356</accession>